<reference key="1">
    <citation type="journal article" date="2005" name="Nucleic Acids Res.">
        <title>Genome dynamics and diversity of Shigella species, the etiologic agents of bacillary dysentery.</title>
        <authorList>
            <person name="Yang F."/>
            <person name="Yang J."/>
            <person name="Zhang X."/>
            <person name="Chen L."/>
            <person name="Jiang Y."/>
            <person name="Yan Y."/>
            <person name="Tang X."/>
            <person name="Wang J."/>
            <person name="Xiong Z."/>
            <person name="Dong J."/>
            <person name="Xue Y."/>
            <person name="Zhu Y."/>
            <person name="Xu X."/>
            <person name="Sun L."/>
            <person name="Chen S."/>
            <person name="Nie H."/>
            <person name="Peng J."/>
            <person name="Xu J."/>
            <person name="Wang Y."/>
            <person name="Yuan Z."/>
            <person name="Wen Y."/>
            <person name="Yao Z."/>
            <person name="Shen Y."/>
            <person name="Qiang B."/>
            <person name="Hou Y."/>
            <person name="Yu J."/>
            <person name="Jin Q."/>
        </authorList>
    </citation>
    <scope>NUCLEOTIDE SEQUENCE [LARGE SCALE GENOMIC DNA]</scope>
    <source>
        <strain>Ss046</strain>
    </source>
</reference>
<name>RL4_SHISS</name>
<keyword id="KW-1185">Reference proteome</keyword>
<keyword id="KW-0687">Ribonucleoprotein</keyword>
<keyword id="KW-0689">Ribosomal protein</keyword>
<keyword id="KW-0694">RNA-binding</keyword>
<keyword id="KW-0699">rRNA-binding</keyword>
<feature type="chain" id="PRO_0000242438" description="Large ribosomal subunit protein uL4">
    <location>
        <begin position="1"/>
        <end position="201"/>
    </location>
</feature>
<feature type="region of interest" description="Disordered" evidence="2">
    <location>
        <begin position="44"/>
        <end position="71"/>
    </location>
</feature>
<protein>
    <recommendedName>
        <fullName evidence="1">Large ribosomal subunit protein uL4</fullName>
    </recommendedName>
    <alternativeName>
        <fullName evidence="3">50S ribosomal protein L4</fullName>
    </alternativeName>
</protein>
<gene>
    <name evidence="1" type="primary">rplD</name>
    <name type="ordered locus">SSON_3460</name>
</gene>
<evidence type="ECO:0000255" key="1">
    <source>
        <dbReference type="HAMAP-Rule" id="MF_01328"/>
    </source>
</evidence>
<evidence type="ECO:0000256" key="2">
    <source>
        <dbReference type="SAM" id="MobiDB-lite"/>
    </source>
</evidence>
<evidence type="ECO:0000305" key="3"/>
<proteinExistence type="inferred from homology"/>
<sequence>MELVLKDAQSALTVSETTFGRDFNEALVHQVVVAYAAGARQGTRAQKTRAEVTGSGKKPWRQKGTGRARSGSIKSPIWRSGGVTFAARPQDHSQKVNKKMYRGALKSILSELVRQDRLIVVEKFSVEAPKTKLLAQKLKDMALEDVLIITGELDENLFLAARNLHKVDVRDATGIDPVSLIAFDKVVMTADAVKQVEEMLA</sequence>
<accession>Q3YWU0</accession>
<comment type="function">
    <text evidence="1">One of the primary rRNA binding proteins, this protein initially binds near the 5'-end of the 23S rRNA. It is important during the early stages of 50S assembly. It makes multiple contacts with different domains of the 23S rRNA in the assembled 50S subunit and ribosome.</text>
</comment>
<comment type="function">
    <text evidence="1">Forms part of the polypeptide exit tunnel.</text>
</comment>
<comment type="subunit">
    <text evidence="1">Part of the 50S ribosomal subunit.</text>
</comment>
<comment type="similarity">
    <text evidence="1">Belongs to the universal ribosomal protein uL4 family.</text>
</comment>
<organism>
    <name type="scientific">Shigella sonnei (strain Ss046)</name>
    <dbReference type="NCBI Taxonomy" id="300269"/>
    <lineage>
        <taxon>Bacteria</taxon>
        <taxon>Pseudomonadati</taxon>
        <taxon>Pseudomonadota</taxon>
        <taxon>Gammaproteobacteria</taxon>
        <taxon>Enterobacterales</taxon>
        <taxon>Enterobacteriaceae</taxon>
        <taxon>Shigella</taxon>
    </lineage>
</organism>
<dbReference type="EMBL" id="CP000038">
    <property type="protein sequence ID" value="AAZ90022.1"/>
    <property type="molecule type" value="Genomic_DNA"/>
</dbReference>
<dbReference type="RefSeq" id="WP_000424395.1">
    <property type="nucleotide sequence ID" value="NC_007384.1"/>
</dbReference>
<dbReference type="SMR" id="Q3YWU0"/>
<dbReference type="GeneID" id="97442859"/>
<dbReference type="KEGG" id="ssn:SSON_3460"/>
<dbReference type="HOGENOM" id="CLU_041575_5_2_6"/>
<dbReference type="Proteomes" id="UP000002529">
    <property type="component" value="Chromosome"/>
</dbReference>
<dbReference type="GO" id="GO:1990904">
    <property type="term" value="C:ribonucleoprotein complex"/>
    <property type="evidence" value="ECO:0007669"/>
    <property type="project" value="UniProtKB-KW"/>
</dbReference>
<dbReference type="GO" id="GO:0005840">
    <property type="term" value="C:ribosome"/>
    <property type="evidence" value="ECO:0007669"/>
    <property type="project" value="UniProtKB-KW"/>
</dbReference>
<dbReference type="GO" id="GO:0019843">
    <property type="term" value="F:rRNA binding"/>
    <property type="evidence" value="ECO:0007669"/>
    <property type="project" value="UniProtKB-UniRule"/>
</dbReference>
<dbReference type="GO" id="GO:0003735">
    <property type="term" value="F:structural constituent of ribosome"/>
    <property type="evidence" value="ECO:0007669"/>
    <property type="project" value="InterPro"/>
</dbReference>
<dbReference type="GO" id="GO:0006412">
    <property type="term" value="P:translation"/>
    <property type="evidence" value="ECO:0007669"/>
    <property type="project" value="UniProtKB-UniRule"/>
</dbReference>
<dbReference type="FunFam" id="3.40.1370.10:FF:000001">
    <property type="entry name" value="50S ribosomal protein L4"/>
    <property type="match status" value="1"/>
</dbReference>
<dbReference type="Gene3D" id="3.40.1370.10">
    <property type="match status" value="1"/>
</dbReference>
<dbReference type="HAMAP" id="MF_01328_B">
    <property type="entry name" value="Ribosomal_uL4_B"/>
    <property type="match status" value="1"/>
</dbReference>
<dbReference type="InterPro" id="IPR002136">
    <property type="entry name" value="Ribosomal_uL4"/>
</dbReference>
<dbReference type="InterPro" id="IPR013005">
    <property type="entry name" value="Ribosomal_uL4-like"/>
</dbReference>
<dbReference type="InterPro" id="IPR023574">
    <property type="entry name" value="Ribosomal_uL4_dom_sf"/>
</dbReference>
<dbReference type="NCBIfam" id="TIGR03953">
    <property type="entry name" value="rplD_bact"/>
    <property type="match status" value="1"/>
</dbReference>
<dbReference type="PANTHER" id="PTHR10746">
    <property type="entry name" value="50S RIBOSOMAL PROTEIN L4"/>
    <property type="match status" value="1"/>
</dbReference>
<dbReference type="PANTHER" id="PTHR10746:SF6">
    <property type="entry name" value="LARGE RIBOSOMAL SUBUNIT PROTEIN UL4M"/>
    <property type="match status" value="1"/>
</dbReference>
<dbReference type="Pfam" id="PF00573">
    <property type="entry name" value="Ribosomal_L4"/>
    <property type="match status" value="1"/>
</dbReference>
<dbReference type="SUPFAM" id="SSF52166">
    <property type="entry name" value="Ribosomal protein L4"/>
    <property type="match status" value="1"/>
</dbReference>